<organism>
    <name type="scientific">Acidithiobacillus ferrooxidans (strain ATCC 23270 / DSM 14882 / CIP 104768 / NCIMB 8455)</name>
    <name type="common">Ferrobacillus ferrooxidans (strain ATCC 23270)</name>
    <dbReference type="NCBI Taxonomy" id="243159"/>
    <lineage>
        <taxon>Bacteria</taxon>
        <taxon>Pseudomonadati</taxon>
        <taxon>Pseudomonadota</taxon>
        <taxon>Acidithiobacillia</taxon>
        <taxon>Acidithiobacillales</taxon>
        <taxon>Acidithiobacillaceae</taxon>
        <taxon>Acidithiobacillus</taxon>
    </lineage>
</organism>
<comment type="subcellular location">
    <subcellularLocation>
        <location>Cytoplasm</location>
    </subcellularLocation>
    <subcellularLocation>
        <location evidence="1">Cell inner membrane</location>
        <topology evidence="1">Peripheral membrane protein</topology>
        <orientation evidence="1">Cytoplasmic side</orientation>
    </subcellularLocation>
</comment>
<comment type="similarity">
    <text evidence="1">Belongs to the HflD family.</text>
</comment>
<keyword id="KW-0997">Cell inner membrane</keyword>
<keyword id="KW-1003">Cell membrane</keyword>
<keyword id="KW-0963">Cytoplasm</keyword>
<keyword id="KW-0472">Membrane</keyword>
<keyword id="KW-1185">Reference proteome</keyword>
<sequence>MWSFLLPDARRRRDRALGLAGVLRSALLVQDIARNGAQPGDLLQTCIRSVLALDSKDSLRALGDIDSLRHSLALLCPLLQRGPGNAREAELLRYSMALTTLGKRLLKNASATRRVQEGVEQAQRQIAHFADPMQRSIVAGLAQTYTEAIGILRPRIIVSGESRFLSDPDDAARIRTLLLSGIRAAVLWRQAGGRLPATILERRALCQEAEELLATHPQLTR</sequence>
<proteinExistence type="inferred from homology"/>
<name>HFLD_ACIF2</name>
<reference key="1">
    <citation type="journal article" date="2008" name="BMC Genomics">
        <title>Acidithiobacillus ferrooxidans metabolism: from genome sequence to industrial applications.</title>
        <authorList>
            <person name="Valdes J."/>
            <person name="Pedroso I."/>
            <person name="Quatrini R."/>
            <person name="Dodson R.J."/>
            <person name="Tettelin H."/>
            <person name="Blake R. II"/>
            <person name="Eisen J.A."/>
            <person name="Holmes D.S."/>
        </authorList>
    </citation>
    <scope>NUCLEOTIDE SEQUENCE [LARGE SCALE GENOMIC DNA]</scope>
    <source>
        <strain>ATCC 23270 / DSM 14882 / CIP 104768 / NCIMB 8455</strain>
    </source>
</reference>
<evidence type="ECO:0000255" key="1">
    <source>
        <dbReference type="HAMAP-Rule" id="MF_00695"/>
    </source>
</evidence>
<dbReference type="EMBL" id="CP001219">
    <property type="protein sequence ID" value="ACK78503.1"/>
    <property type="molecule type" value="Genomic_DNA"/>
</dbReference>
<dbReference type="RefSeq" id="WP_012536439.1">
    <property type="nucleotide sequence ID" value="NC_011761.1"/>
</dbReference>
<dbReference type="SMR" id="B7J7A0"/>
<dbReference type="STRING" id="243159.AFE_0923"/>
<dbReference type="PaxDb" id="243159-AFE_0923"/>
<dbReference type="GeneID" id="65280245"/>
<dbReference type="KEGG" id="afr:AFE_0923"/>
<dbReference type="eggNOG" id="COG2915">
    <property type="taxonomic scope" value="Bacteria"/>
</dbReference>
<dbReference type="HOGENOM" id="CLU_098920_0_0_6"/>
<dbReference type="Proteomes" id="UP000001362">
    <property type="component" value="Chromosome"/>
</dbReference>
<dbReference type="GO" id="GO:0005737">
    <property type="term" value="C:cytoplasm"/>
    <property type="evidence" value="ECO:0007669"/>
    <property type="project" value="UniProtKB-SubCell"/>
</dbReference>
<dbReference type="GO" id="GO:0005886">
    <property type="term" value="C:plasma membrane"/>
    <property type="evidence" value="ECO:0007669"/>
    <property type="project" value="UniProtKB-SubCell"/>
</dbReference>
<dbReference type="Gene3D" id="1.10.3890.10">
    <property type="entry name" value="HflD-like"/>
    <property type="match status" value="1"/>
</dbReference>
<dbReference type="HAMAP" id="MF_00695">
    <property type="entry name" value="HflD_protein"/>
    <property type="match status" value="1"/>
</dbReference>
<dbReference type="InterPro" id="IPR007451">
    <property type="entry name" value="HflD"/>
</dbReference>
<dbReference type="InterPro" id="IPR035932">
    <property type="entry name" value="HflD-like_sf"/>
</dbReference>
<dbReference type="NCBIfam" id="NF001246">
    <property type="entry name" value="PRK00218.1-2"/>
    <property type="match status" value="1"/>
</dbReference>
<dbReference type="PANTHER" id="PTHR38100">
    <property type="entry name" value="HIGH FREQUENCY LYSOGENIZATION PROTEIN HFLD"/>
    <property type="match status" value="1"/>
</dbReference>
<dbReference type="PANTHER" id="PTHR38100:SF1">
    <property type="entry name" value="HIGH FREQUENCY LYSOGENIZATION PROTEIN HFLD"/>
    <property type="match status" value="1"/>
</dbReference>
<dbReference type="Pfam" id="PF04356">
    <property type="entry name" value="DUF489"/>
    <property type="match status" value="1"/>
</dbReference>
<dbReference type="SUPFAM" id="SSF101322">
    <property type="entry name" value="YcfC-like"/>
    <property type="match status" value="1"/>
</dbReference>
<gene>
    <name evidence="1" type="primary">hflD</name>
    <name type="ordered locus">AFE_0923</name>
</gene>
<accession>B7J7A0</accession>
<feature type="chain" id="PRO_0000390634" description="High frequency lysogenization protein HflD homolog">
    <location>
        <begin position="1"/>
        <end position="221"/>
    </location>
</feature>
<protein>
    <recommendedName>
        <fullName evidence="1">High frequency lysogenization protein HflD homolog</fullName>
    </recommendedName>
</protein>